<accession>Q57939</accession>
<protein>
    <recommendedName>
        <fullName>Uncharacterized protein MJ0519</fullName>
    </recommendedName>
</protein>
<organism>
    <name type="scientific">Methanocaldococcus jannaschii (strain ATCC 43067 / DSM 2661 / JAL-1 / JCM 10045 / NBRC 100440)</name>
    <name type="common">Methanococcus jannaschii</name>
    <dbReference type="NCBI Taxonomy" id="243232"/>
    <lineage>
        <taxon>Archaea</taxon>
        <taxon>Methanobacteriati</taxon>
        <taxon>Methanobacteriota</taxon>
        <taxon>Methanomada group</taxon>
        <taxon>Methanococci</taxon>
        <taxon>Methanococcales</taxon>
        <taxon>Methanocaldococcaceae</taxon>
        <taxon>Methanocaldococcus</taxon>
    </lineage>
</organism>
<reference key="1">
    <citation type="journal article" date="1996" name="Science">
        <title>Complete genome sequence of the methanogenic archaeon, Methanococcus jannaschii.</title>
        <authorList>
            <person name="Bult C.J."/>
            <person name="White O."/>
            <person name="Olsen G.J."/>
            <person name="Zhou L."/>
            <person name="Fleischmann R.D."/>
            <person name="Sutton G.G."/>
            <person name="Blake J.A."/>
            <person name="FitzGerald L.M."/>
            <person name="Clayton R.A."/>
            <person name="Gocayne J.D."/>
            <person name="Kerlavage A.R."/>
            <person name="Dougherty B.A."/>
            <person name="Tomb J.-F."/>
            <person name="Adams M.D."/>
            <person name="Reich C.I."/>
            <person name="Overbeek R."/>
            <person name="Kirkness E.F."/>
            <person name="Weinstock K.G."/>
            <person name="Merrick J.M."/>
            <person name="Glodek A."/>
            <person name="Scott J.L."/>
            <person name="Geoghagen N.S.M."/>
            <person name="Weidman J.F."/>
            <person name="Fuhrmann J.L."/>
            <person name="Nguyen D."/>
            <person name="Utterback T.R."/>
            <person name="Kelley J.M."/>
            <person name="Peterson J.D."/>
            <person name="Sadow P.W."/>
            <person name="Hanna M.C."/>
            <person name="Cotton M.D."/>
            <person name="Roberts K.M."/>
            <person name="Hurst M.A."/>
            <person name="Kaine B.P."/>
            <person name="Borodovsky M."/>
            <person name="Klenk H.-P."/>
            <person name="Fraser C.M."/>
            <person name="Smith H.O."/>
            <person name="Woese C.R."/>
            <person name="Venter J.C."/>
        </authorList>
    </citation>
    <scope>NUCLEOTIDE SEQUENCE [LARGE SCALE GENOMIC DNA]</scope>
    <source>
        <strain>ATCC 43067 / DSM 2661 / JAL-1 / JCM 10045 / NBRC 100440</strain>
    </source>
</reference>
<proteinExistence type="predicted"/>
<keyword id="KW-1003">Cell membrane</keyword>
<keyword id="KW-0472">Membrane</keyword>
<keyword id="KW-1185">Reference proteome</keyword>
<keyword id="KW-0812">Transmembrane</keyword>
<keyword id="KW-1133">Transmembrane helix</keyword>
<sequence length="84" mass="9680">MDKMKSYIYFFTIACIIAVIYCVLVNLLQINVIPVVLAFSLILILTISTINKKIAHKMEDIEVLFMLLVLAFFAYAIYKLYIPV</sequence>
<dbReference type="EMBL" id="L77117">
    <property type="protein sequence ID" value="AAB98513.1"/>
    <property type="molecule type" value="Genomic_DNA"/>
</dbReference>
<dbReference type="PIR" id="G64364">
    <property type="entry name" value="G64364"/>
</dbReference>
<dbReference type="SMR" id="Q57939"/>
<dbReference type="STRING" id="243232.MJ_0519"/>
<dbReference type="PaxDb" id="243232-MJ_0519"/>
<dbReference type="EnsemblBacteria" id="AAB98513">
    <property type="protein sequence ID" value="AAB98513"/>
    <property type="gene ID" value="MJ_0519"/>
</dbReference>
<dbReference type="KEGG" id="mja:MJ_0519"/>
<dbReference type="eggNOG" id="arCOG08277">
    <property type="taxonomic scope" value="Archaea"/>
</dbReference>
<dbReference type="HOGENOM" id="CLU_188101_0_0_2"/>
<dbReference type="InParanoid" id="Q57939"/>
<dbReference type="Proteomes" id="UP000000805">
    <property type="component" value="Chromosome"/>
</dbReference>
<dbReference type="GO" id="GO:0005886">
    <property type="term" value="C:plasma membrane"/>
    <property type="evidence" value="ECO:0007669"/>
    <property type="project" value="UniProtKB-SubCell"/>
</dbReference>
<dbReference type="InterPro" id="IPR011319">
    <property type="entry name" value="Prd_NiFe_hyd_3_EhaK"/>
</dbReference>
<dbReference type="PIRSF" id="PIRSF036538">
    <property type="entry name" value="EhaK"/>
    <property type="match status" value="1"/>
</dbReference>
<evidence type="ECO:0000255" key="1"/>
<evidence type="ECO:0000305" key="2"/>
<feature type="chain" id="PRO_0000106909" description="Uncharacterized protein MJ0519">
    <location>
        <begin position="1"/>
        <end position="84"/>
    </location>
</feature>
<feature type="transmembrane region" description="Helical" evidence="1">
    <location>
        <begin position="8"/>
        <end position="28"/>
    </location>
</feature>
<feature type="transmembrane region" description="Helical" evidence="1">
    <location>
        <begin position="30"/>
        <end position="50"/>
    </location>
</feature>
<feature type="transmembrane region" description="Helical" evidence="1">
    <location>
        <begin position="63"/>
        <end position="83"/>
    </location>
</feature>
<comment type="subcellular location">
    <subcellularLocation>
        <location evidence="2">Cell membrane</location>
        <topology evidence="2">Multi-pass membrane protein</topology>
    </subcellularLocation>
</comment>
<name>Y519_METJA</name>
<gene>
    <name type="ordered locus">MJ0519</name>
</gene>